<gene>
    <name type="primary">xynD</name>
</gene>
<feature type="signal peptide" evidence="4">
    <location>
        <begin position="1"/>
        <end position="26"/>
    </location>
</feature>
<feature type="chain" id="PRO_0000012202" description="Arabinoxylan arabinofuranohydrolase">
    <location>
        <begin position="27"/>
        <end position="635"/>
    </location>
</feature>
<feature type="domain" description="CBM6 1" evidence="3">
    <location>
        <begin position="379"/>
        <end position="508"/>
    </location>
</feature>
<feature type="domain" description="CBM6 2" evidence="3">
    <location>
        <begin position="517"/>
        <end position="634"/>
    </location>
</feature>
<feature type="active site" description="Proton acceptor" evidence="2">
    <location>
        <position position="49"/>
    </location>
</feature>
<feature type="active site" description="Proton donor" evidence="2">
    <location>
        <position position="248"/>
    </location>
</feature>
<feature type="binding site" evidence="1">
    <location>
        <position position="311"/>
    </location>
    <ligand>
        <name>substrate</name>
    </ligand>
</feature>
<feature type="binding site" evidence="1">
    <location>
        <position position="382"/>
    </location>
    <ligand>
        <name>Ca(2+)</name>
        <dbReference type="ChEBI" id="CHEBI:29108"/>
        <label>1</label>
        <note>structural</note>
    </ligand>
</feature>
<feature type="binding site" evidence="1">
    <location>
        <position position="384"/>
    </location>
    <ligand>
        <name>Ca(2+)</name>
        <dbReference type="ChEBI" id="CHEBI:29108"/>
        <label>1</label>
        <note>structural</note>
    </ligand>
</feature>
<feature type="binding site" evidence="1">
    <location>
        <position position="406"/>
    </location>
    <ligand>
        <name>Ca(2+)</name>
        <dbReference type="ChEBI" id="CHEBI:29108"/>
        <label>1</label>
        <note>structural</note>
    </ligand>
</feature>
<feature type="binding site" evidence="1">
    <location>
        <position position="407"/>
    </location>
    <ligand>
        <name>Ca(2+)</name>
        <dbReference type="ChEBI" id="CHEBI:29108"/>
        <label>1</label>
        <note>structural</note>
    </ligand>
</feature>
<feature type="binding site" evidence="1">
    <location>
        <position position="503"/>
    </location>
    <ligand>
        <name>Ca(2+)</name>
        <dbReference type="ChEBI" id="CHEBI:29108"/>
        <label>1</label>
        <note>structural</note>
    </ligand>
</feature>
<feature type="binding site">
    <location>
        <position position="520"/>
    </location>
    <ligand>
        <name>Ca(2+)</name>
        <dbReference type="ChEBI" id="CHEBI:29108"/>
        <label>2</label>
        <note>structural</note>
    </ligand>
</feature>
<feature type="binding site">
    <location>
        <position position="522"/>
    </location>
    <ligand>
        <name>Ca(2+)</name>
        <dbReference type="ChEBI" id="CHEBI:29108"/>
        <label>2</label>
        <note>structural</note>
    </ligand>
</feature>
<feature type="binding site">
    <location>
        <position position="539"/>
    </location>
    <ligand>
        <name>Ca(2+)</name>
        <dbReference type="ChEBI" id="CHEBI:29108"/>
        <label>2</label>
        <note>structural</note>
    </ligand>
</feature>
<feature type="binding site">
    <location>
        <position position="544"/>
    </location>
    <ligand>
        <name>Ca(2+)</name>
        <dbReference type="ChEBI" id="CHEBI:29108"/>
        <label>3</label>
        <note>structural</note>
    </ligand>
</feature>
<feature type="binding site">
    <location>
        <position position="620"/>
    </location>
    <ligand>
        <name>Ca(2+)</name>
        <dbReference type="ChEBI" id="CHEBI:29108"/>
        <label>3</label>
        <note>structural</note>
    </ligand>
</feature>
<feature type="binding site">
    <location>
        <position position="624"/>
    </location>
    <ligand>
        <name>Ca(2+)</name>
        <dbReference type="ChEBI" id="CHEBI:29108"/>
        <label>3</label>
        <note>structural</note>
    </ligand>
</feature>
<feature type="binding site">
    <location>
        <position position="625"/>
    </location>
    <ligand>
        <name>Ca(2+)</name>
        <dbReference type="ChEBI" id="CHEBI:29108"/>
        <label>3</label>
        <note>structural</note>
    </ligand>
</feature>
<feature type="binding site">
    <location>
        <position position="629"/>
    </location>
    <ligand>
        <name>Ca(2+)</name>
        <dbReference type="ChEBI" id="CHEBI:29108"/>
        <label>2</label>
        <note>structural</note>
    </ligand>
</feature>
<feature type="site" description="Important for catalytic activity, responsible for pKa modulation of the active site Glu and correct orientation of both the proton donor and substrate" evidence="2">
    <location>
        <position position="188"/>
    </location>
</feature>
<feature type="strand" evidence="6">
    <location>
        <begin position="517"/>
        <end position="520"/>
    </location>
</feature>
<feature type="helix" evidence="6">
    <location>
        <begin position="521"/>
        <end position="523"/>
    </location>
</feature>
<feature type="strand" evidence="6">
    <location>
        <begin position="524"/>
        <end position="530"/>
    </location>
</feature>
<feature type="strand" evidence="6">
    <location>
        <begin position="532"/>
        <end position="534"/>
    </location>
</feature>
<feature type="strand" evidence="6">
    <location>
        <begin position="536"/>
        <end position="543"/>
    </location>
</feature>
<feature type="strand" evidence="6">
    <location>
        <begin position="549"/>
        <end position="581"/>
    </location>
</feature>
<feature type="strand" evidence="6">
    <location>
        <begin position="584"/>
        <end position="595"/>
    </location>
</feature>
<feature type="strand" evidence="6">
    <location>
        <begin position="597"/>
        <end position="605"/>
    </location>
</feature>
<feature type="strand" evidence="6">
    <location>
        <begin position="609"/>
        <end position="618"/>
    </location>
</feature>
<feature type="strand" evidence="6">
    <location>
        <begin position="620"/>
        <end position="623"/>
    </location>
</feature>
<feature type="strand" evidence="6">
    <location>
        <begin position="626"/>
        <end position="634"/>
    </location>
</feature>
<comment type="function">
    <text evidence="1 4">Cleaves arabinose units from O-2- or O-3-monosubstituted xylose residues, thereby assisting in arabinoxylan (AX) and short-chain arabinoxylo-oligosaccharide (AXOS) degradation (By similarity). Preferres wheat flour xylan over oat spelt xylan as substrate. Does not display endoxylanase activity.</text>
</comment>
<comment type="catalytic activity">
    <reaction>
        <text>Hydrolysis of terminal non-reducing alpha-L-arabinofuranoside residues in alpha-L-arabinosides.</text>
        <dbReference type="EC" id="3.2.1.55"/>
    </reaction>
</comment>
<comment type="activity regulation">
    <text evidence="4">Activated by calcium and magnesium. Inhibited by copper.</text>
</comment>
<comment type="biophysicochemical properties">
    <phDependence>
        <text evidence="4">Optimum pH is 6.5.</text>
    </phDependence>
    <temperatureDependence>
        <text evidence="4">Optimum temperature is 55 degrees Celsius.</text>
    </temperatureDependence>
</comment>
<comment type="pathway">
    <text>Glycan degradation; xylan degradation.</text>
</comment>
<comment type="subcellular location">
    <subcellularLocation>
        <location>Secreted</location>
    </subcellularLocation>
</comment>
<comment type="domain">
    <text>The C-terminal CBM6 domain shows calcium-dependent xylo-oligosaccharide and xylan binding. It binds, next to the structural calcium ion, a second calcium ion that, in addition to its coordination sites on the protein, completes its heptacoordination through coordination to the bound xylose moiety.</text>
</comment>
<comment type="similarity">
    <text evidence="5">Belongs to the glycosyl hydrolase 43 family.</text>
</comment>
<dbReference type="EC" id="3.2.1.55"/>
<dbReference type="EMBL" id="X57094">
    <property type="protein sequence ID" value="CAA40378.1"/>
    <property type="molecule type" value="Genomic_DNA"/>
</dbReference>
<dbReference type="PIR" id="S19011">
    <property type="entry name" value="S19011"/>
</dbReference>
<dbReference type="RefSeq" id="WP_019687278.1">
    <property type="nucleotide sequence ID" value="NZ_UGSC01000001.1"/>
</dbReference>
<dbReference type="PDB" id="1UX7">
    <property type="method" value="X-ray"/>
    <property type="resolution" value="1.50 A"/>
    <property type="chains" value="A=516-635"/>
</dbReference>
<dbReference type="PDB" id="1W0N">
    <property type="method" value="X-ray"/>
    <property type="resolution" value="0.80 A"/>
    <property type="chains" value="A=505-635"/>
</dbReference>
<dbReference type="PDBsum" id="1UX7"/>
<dbReference type="PDBsum" id="1W0N"/>
<dbReference type="SMR" id="P45796"/>
<dbReference type="CAZy" id="CBM36">
    <property type="family name" value="Carbohydrate-Binding Module Family 36"/>
</dbReference>
<dbReference type="CAZy" id="CBM6">
    <property type="family name" value="Carbohydrate-Binding Module Family 6"/>
</dbReference>
<dbReference type="CAZy" id="GH43">
    <property type="family name" value="Glycoside Hydrolase Family 43"/>
</dbReference>
<dbReference type="eggNOG" id="COG3507">
    <property type="taxonomic scope" value="Bacteria"/>
</dbReference>
<dbReference type="BRENDA" id="3.2.1.8">
    <property type="organism ID" value="683"/>
</dbReference>
<dbReference type="UniPathway" id="UPA00114"/>
<dbReference type="EvolutionaryTrace" id="P45796"/>
<dbReference type="GO" id="GO:0005576">
    <property type="term" value="C:extracellular region"/>
    <property type="evidence" value="ECO:0007669"/>
    <property type="project" value="UniProtKB-SubCell"/>
</dbReference>
<dbReference type="GO" id="GO:0046556">
    <property type="term" value="F:alpha-L-arabinofuranosidase activity"/>
    <property type="evidence" value="ECO:0007669"/>
    <property type="project" value="UniProtKB-EC"/>
</dbReference>
<dbReference type="GO" id="GO:0030246">
    <property type="term" value="F:carbohydrate binding"/>
    <property type="evidence" value="ECO:0007669"/>
    <property type="project" value="InterPro"/>
</dbReference>
<dbReference type="GO" id="GO:0046872">
    <property type="term" value="F:metal ion binding"/>
    <property type="evidence" value="ECO:0007669"/>
    <property type="project" value="UniProtKB-KW"/>
</dbReference>
<dbReference type="GO" id="GO:0045493">
    <property type="term" value="P:xylan catabolic process"/>
    <property type="evidence" value="ECO:0007669"/>
    <property type="project" value="UniProtKB-UniPathway"/>
</dbReference>
<dbReference type="CDD" id="cd04078">
    <property type="entry name" value="CBM36_xylanase-like"/>
    <property type="match status" value="1"/>
</dbReference>
<dbReference type="CDD" id="cd04084">
    <property type="entry name" value="CBM6_xylanase-like"/>
    <property type="match status" value="1"/>
</dbReference>
<dbReference type="CDD" id="cd09003">
    <property type="entry name" value="GH43_XynD-like"/>
    <property type="match status" value="1"/>
</dbReference>
<dbReference type="Gene3D" id="2.60.120.260">
    <property type="entry name" value="Galactose-binding domain-like"/>
    <property type="match status" value="2"/>
</dbReference>
<dbReference type="Gene3D" id="2.115.10.20">
    <property type="entry name" value="Glycosyl hydrolase domain, family 43"/>
    <property type="match status" value="1"/>
</dbReference>
<dbReference type="InterPro" id="IPR005084">
    <property type="entry name" value="CBM6"/>
</dbReference>
<dbReference type="InterPro" id="IPR006584">
    <property type="entry name" value="Cellulose-bd_IV"/>
</dbReference>
<dbReference type="InterPro" id="IPR008979">
    <property type="entry name" value="Galactose-bd-like_sf"/>
</dbReference>
<dbReference type="InterPro" id="IPR006710">
    <property type="entry name" value="Glyco_hydro_43"/>
</dbReference>
<dbReference type="InterPro" id="IPR023296">
    <property type="entry name" value="Glyco_hydro_beta-prop_sf"/>
</dbReference>
<dbReference type="InterPro" id="IPR052176">
    <property type="entry name" value="Glycosyl_Hydrlase_43_Enz"/>
</dbReference>
<dbReference type="PANTHER" id="PTHR43772">
    <property type="entry name" value="ENDO-1,4-BETA-XYLANASE"/>
    <property type="match status" value="1"/>
</dbReference>
<dbReference type="PANTHER" id="PTHR43772:SF2">
    <property type="entry name" value="PUTATIVE (AFU_ORTHOLOGUE AFUA_2G04480)-RELATED"/>
    <property type="match status" value="1"/>
</dbReference>
<dbReference type="Pfam" id="PF03422">
    <property type="entry name" value="CBM_6"/>
    <property type="match status" value="2"/>
</dbReference>
<dbReference type="Pfam" id="PF04616">
    <property type="entry name" value="Glyco_hydro_43"/>
    <property type="match status" value="1"/>
</dbReference>
<dbReference type="SMART" id="SM00606">
    <property type="entry name" value="CBD_IV"/>
    <property type="match status" value="1"/>
</dbReference>
<dbReference type="SUPFAM" id="SSF75005">
    <property type="entry name" value="Arabinanase/levansucrase/invertase"/>
    <property type="match status" value="1"/>
</dbReference>
<dbReference type="SUPFAM" id="SSF49785">
    <property type="entry name" value="Galactose-binding domain-like"/>
    <property type="match status" value="2"/>
</dbReference>
<dbReference type="PROSITE" id="PS51175">
    <property type="entry name" value="CBM6"/>
    <property type="match status" value="2"/>
</dbReference>
<organism>
    <name type="scientific">Paenibacillus polymyxa</name>
    <name type="common">Bacillus polymyxa</name>
    <dbReference type="NCBI Taxonomy" id="1406"/>
    <lineage>
        <taxon>Bacteria</taxon>
        <taxon>Bacillati</taxon>
        <taxon>Bacillota</taxon>
        <taxon>Bacilli</taxon>
        <taxon>Bacillales</taxon>
        <taxon>Paenibacillaceae</taxon>
        <taxon>Paenibacillus</taxon>
    </lineage>
</organism>
<sequence length="635" mass="67914">MIRKCLVLFLSFALLLSVFPMLNVDAANRPLAKIPGNSNPLMDHKLGADPYSLVYDGRVYIFMSSDTYVYNKDGSIKENDFSALDRIQVISSTDMVNWTDHGTIPVAGANNKNSGRGIAKWASNSWAPAVAHKKINGRDKFFLYFANGGAGIGVLTADTPIGPWTDPLGKALVTHSTPGMAGVTWLFDPAVLVDDDGTGYLYSGGGIPNESDPASIANPKTARVIKLGADMTSVIGSATTIDAPYLFEDSGIHKYNGKYYYSYCINFAGTHPQQYPAGEIGYMVSDNPMGPFTYKGHFLKNPYTFFGVGGNNHHAVFNFKNEWYVVYHAQTVSKAQIGAGKGYRSPHINKLVHKEDGSISEVQGNMTGIAQLSNMNPYTRVEAETIAWQAGVTTEPTQASGGPISNLNVTNIHNGDWIAVGKADFGSAGAKTFKANVATNVGGNIEVRLDSETGPLVGSLKVPSTGGMQTWREVETTINNATGVHNIYLVFTGSGSGNLLNLDAWQFTPNTGGNTITKVEAENMKIGGTYAGKISAPFDGVALYANADYVSYSQYFANSTHNISVRGASSNAGTAKVDLVIGGVTVGSFNFTGKTPTVQTLSNITHATGDQEIKLALTSDDGTWDAYVDFIEFSL</sequence>
<accession>P45796</accession>
<proteinExistence type="evidence at protein level"/>
<protein>
    <recommendedName>
        <fullName>Arabinoxylan arabinofuranohydrolase</fullName>
        <shortName>AXH</shortName>
        <ecNumber>3.2.1.55</ecNumber>
    </recommendedName>
    <alternativeName>
        <fullName>AXH-m2,3</fullName>
        <shortName>AXH-m23</shortName>
    </alternativeName>
    <alternativeName>
        <fullName>Alpha-L-arabinofuranosidase</fullName>
        <shortName>AF</shortName>
    </alternativeName>
</protein>
<keyword id="KW-0002">3D-structure</keyword>
<keyword id="KW-0106">Calcium</keyword>
<keyword id="KW-0119">Carbohydrate metabolism</keyword>
<keyword id="KW-0903">Direct protein sequencing</keyword>
<keyword id="KW-0326">Glycosidase</keyword>
<keyword id="KW-0378">Hydrolase</keyword>
<keyword id="KW-0479">Metal-binding</keyword>
<keyword id="KW-0624">Polysaccharide degradation</keyword>
<keyword id="KW-0677">Repeat</keyword>
<keyword id="KW-0964">Secreted</keyword>
<keyword id="KW-0732">Signal</keyword>
<keyword id="KW-0858">Xylan degradation</keyword>
<name>XYND_PAEPO</name>
<evidence type="ECO:0000250" key="1"/>
<evidence type="ECO:0000250" key="2">
    <source>
        <dbReference type="UniProtKB" id="Q45071"/>
    </source>
</evidence>
<evidence type="ECO:0000255" key="3">
    <source>
        <dbReference type="PROSITE-ProRule" id="PRU00523"/>
    </source>
</evidence>
<evidence type="ECO:0000269" key="4">
    <source>
    </source>
</evidence>
<evidence type="ECO:0000305" key="5"/>
<evidence type="ECO:0007829" key="6">
    <source>
        <dbReference type="PDB" id="1W0N"/>
    </source>
</evidence>
<reference key="1">
    <citation type="journal article" date="1991" name="J. Bacteriol.">
        <title>Two beta-glycanase genes are clustered in Bacillus polymyxa: molecular cloning, expression, and sequence analysis of genes encoding a xylanase and an endo-beta-(1,3)-(1,4)-glucanase.</title>
        <authorList>
            <person name="Gosalbes M.J."/>
            <person name="Perez-Gonzalez J.A."/>
            <person name="Gonzalez R."/>
            <person name="Navarro A."/>
        </authorList>
    </citation>
    <scope>NUCLEOTIDE SEQUENCE [GENOMIC DNA]</scope>
    <source>
        <strain>ATCC 842 / DSM 36 / JCM 2507 / NBRC 15309 / NCIMB 8158 / NCTC 10343 / NRRL B-4317 / VKM B-514</strain>
    </source>
</reference>
<reference key="2">
    <citation type="journal article" date="1995" name="Appl. Microbiol. Biotechnol.">
        <title>Purification and characterization of an arabinofuranosidase from Bacillus polymyxa expressed in Bacillus subtilis.</title>
        <authorList>
            <person name="Morales P."/>
            <person name="Sendra J.M."/>
            <person name="Perez-Gonzalez J.A."/>
        </authorList>
    </citation>
    <scope>PROTEIN SEQUENCE OF 27-46</scope>
    <scope>FUNCTION</scope>
    <scope>BIOPHYSICOCHEMICAL PROPERTIES</scope>
    <scope>ACTIVITY REGULATION</scope>
    <source>
        <strain>CECT 153 / NCTC 4747 / NRRL NRS-1237</strain>
    </source>
</reference>
<reference key="3">
    <citation type="journal article" date="2004" name="Structure">
        <title>Ab initio structure determination and functional characterization of CBM36; a new family of calcium-dependent carbohydrate binding modules.</title>
        <authorList>
            <person name="Jamal-Talabani S."/>
            <person name="Boraston A.B."/>
            <person name="Turkenburg J.P."/>
            <person name="Tarbouriech N."/>
            <person name="Ducros V.M.-A."/>
            <person name="Davies G.J."/>
        </authorList>
    </citation>
    <scope>X-RAY CRYSTALLOGRAPHY (0.8 ANGSTROMS) OF 505-635 IN COMPLEX WITH XYLOTRIOSE</scope>
    <source>
        <strain>ATCC 842 / DSM 36 / JCM 2507 / NBRC 15309 / NCIMB 8158 / NCTC 10343 / NRRL B-4317 / VKM B-514</strain>
    </source>
</reference>